<keyword id="KW-0004">4Fe-4S</keyword>
<keyword id="KW-0408">Iron</keyword>
<keyword id="KW-0411">Iron-sulfur</keyword>
<keyword id="KW-0414">Isoprene biosynthesis</keyword>
<keyword id="KW-0479">Metal-binding</keyword>
<keyword id="KW-0560">Oxidoreductase</keyword>
<keyword id="KW-1185">Reference proteome</keyword>
<accession>B4F2T8</accession>
<evidence type="ECO:0000255" key="1">
    <source>
        <dbReference type="HAMAP-Rule" id="MF_00191"/>
    </source>
</evidence>
<name>ISPH_PROMH</name>
<feature type="chain" id="PRO_1000098965" description="4-hydroxy-3-methylbut-2-enyl diphosphate reductase">
    <location>
        <begin position="1"/>
        <end position="317"/>
    </location>
</feature>
<feature type="active site" description="Proton donor" evidence="1">
    <location>
        <position position="127"/>
    </location>
</feature>
<feature type="binding site" evidence="1">
    <location>
        <position position="12"/>
    </location>
    <ligand>
        <name>[4Fe-4S] cluster</name>
        <dbReference type="ChEBI" id="CHEBI:49883"/>
    </ligand>
</feature>
<feature type="binding site" evidence="1">
    <location>
        <position position="41"/>
    </location>
    <ligand>
        <name>(2E)-4-hydroxy-3-methylbut-2-enyl diphosphate</name>
        <dbReference type="ChEBI" id="CHEBI:128753"/>
    </ligand>
</feature>
<feature type="binding site" evidence="1">
    <location>
        <position position="41"/>
    </location>
    <ligand>
        <name>dimethylallyl diphosphate</name>
        <dbReference type="ChEBI" id="CHEBI:57623"/>
    </ligand>
</feature>
<feature type="binding site" evidence="1">
    <location>
        <position position="41"/>
    </location>
    <ligand>
        <name>isopentenyl diphosphate</name>
        <dbReference type="ChEBI" id="CHEBI:128769"/>
    </ligand>
</feature>
<feature type="binding site" evidence="1">
    <location>
        <position position="74"/>
    </location>
    <ligand>
        <name>(2E)-4-hydroxy-3-methylbut-2-enyl diphosphate</name>
        <dbReference type="ChEBI" id="CHEBI:128753"/>
    </ligand>
</feature>
<feature type="binding site" evidence="1">
    <location>
        <position position="74"/>
    </location>
    <ligand>
        <name>dimethylallyl diphosphate</name>
        <dbReference type="ChEBI" id="CHEBI:57623"/>
    </ligand>
</feature>
<feature type="binding site" evidence="1">
    <location>
        <position position="74"/>
    </location>
    <ligand>
        <name>isopentenyl diphosphate</name>
        <dbReference type="ChEBI" id="CHEBI:128769"/>
    </ligand>
</feature>
<feature type="binding site" evidence="1">
    <location>
        <position position="97"/>
    </location>
    <ligand>
        <name>[4Fe-4S] cluster</name>
        <dbReference type="ChEBI" id="CHEBI:49883"/>
    </ligand>
</feature>
<feature type="binding site" evidence="1">
    <location>
        <position position="125"/>
    </location>
    <ligand>
        <name>(2E)-4-hydroxy-3-methylbut-2-enyl diphosphate</name>
        <dbReference type="ChEBI" id="CHEBI:128753"/>
    </ligand>
</feature>
<feature type="binding site" evidence="1">
    <location>
        <position position="125"/>
    </location>
    <ligand>
        <name>dimethylallyl diphosphate</name>
        <dbReference type="ChEBI" id="CHEBI:57623"/>
    </ligand>
</feature>
<feature type="binding site" evidence="1">
    <location>
        <position position="125"/>
    </location>
    <ligand>
        <name>isopentenyl diphosphate</name>
        <dbReference type="ChEBI" id="CHEBI:128769"/>
    </ligand>
</feature>
<feature type="binding site" evidence="1">
    <location>
        <position position="168"/>
    </location>
    <ligand>
        <name>(2E)-4-hydroxy-3-methylbut-2-enyl diphosphate</name>
        <dbReference type="ChEBI" id="CHEBI:128753"/>
    </ligand>
</feature>
<feature type="binding site" evidence="1">
    <location>
        <position position="198"/>
    </location>
    <ligand>
        <name>[4Fe-4S] cluster</name>
        <dbReference type="ChEBI" id="CHEBI:49883"/>
    </ligand>
</feature>
<feature type="binding site" evidence="1">
    <location>
        <position position="226"/>
    </location>
    <ligand>
        <name>(2E)-4-hydroxy-3-methylbut-2-enyl diphosphate</name>
        <dbReference type="ChEBI" id="CHEBI:128753"/>
    </ligand>
</feature>
<feature type="binding site" evidence="1">
    <location>
        <position position="226"/>
    </location>
    <ligand>
        <name>dimethylallyl diphosphate</name>
        <dbReference type="ChEBI" id="CHEBI:57623"/>
    </ligand>
</feature>
<feature type="binding site" evidence="1">
    <location>
        <position position="226"/>
    </location>
    <ligand>
        <name>isopentenyl diphosphate</name>
        <dbReference type="ChEBI" id="CHEBI:128769"/>
    </ligand>
</feature>
<feature type="binding site" evidence="1">
    <location>
        <position position="227"/>
    </location>
    <ligand>
        <name>(2E)-4-hydroxy-3-methylbut-2-enyl diphosphate</name>
        <dbReference type="ChEBI" id="CHEBI:128753"/>
    </ligand>
</feature>
<feature type="binding site" evidence="1">
    <location>
        <position position="227"/>
    </location>
    <ligand>
        <name>dimethylallyl diphosphate</name>
        <dbReference type="ChEBI" id="CHEBI:57623"/>
    </ligand>
</feature>
<feature type="binding site" evidence="1">
    <location>
        <position position="227"/>
    </location>
    <ligand>
        <name>isopentenyl diphosphate</name>
        <dbReference type="ChEBI" id="CHEBI:128769"/>
    </ligand>
</feature>
<feature type="binding site" evidence="1">
    <location>
        <position position="228"/>
    </location>
    <ligand>
        <name>(2E)-4-hydroxy-3-methylbut-2-enyl diphosphate</name>
        <dbReference type="ChEBI" id="CHEBI:128753"/>
    </ligand>
</feature>
<feature type="binding site" evidence="1">
    <location>
        <position position="228"/>
    </location>
    <ligand>
        <name>dimethylallyl diphosphate</name>
        <dbReference type="ChEBI" id="CHEBI:57623"/>
    </ligand>
</feature>
<feature type="binding site" evidence="1">
    <location>
        <position position="228"/>
    </location>
    <ligand>
        <name>isopentenyl diphosphate</name>
        <dbReference type="ChEBI" id="CHEBI:128769"/>
    </ligand>
</feature>
<feature type="binding site" evidence="1">
    <location>
        <position position="270"/>
    </location>
    <ligand>
        <name>(2E)-4-hydroxy-3-methylbut-2-enyl diphosphate</name>
        <dbReference type="ChEBI" id="CHEBI:128753"/>
    </ligand>
</feature>
<feature type="binding site" evidence="1">
    <location>
        <position position="270"/>
    </location>
    <ligand>
        <name>dimethylallyl diphosphate</name>
        <dbReference type="ChEBI" id="CHEBI:57623"/>
    </ligand>
</feature>
<feature type="binding site" evidence="1">
    <location>
        <position position="270"/>
    </location>
    <ligand>
        <name>isopentenyl diphosphate</name>
        <dbReference type="ChEBI" id="CHEBI:128769"/>
    </ligand>
</feature>
<reference key="1">
    <citation type="journal article" date="2008" name="J. Bacteriol.">
        <title>Complete genome sequence of uropathogenic Proteus mirabilis, a master of both adherence and motility.</title>
        <authorList>
            <person name="Pearson M.M."/>
            <person name="Sebaihia M."/>
            <person name="Churcher C."/>
            <person name="Quail M.A."/>
            <person name="Seshasayee A.S."/>
            <person name="Luscombe N.M."/>
            <person name="Abdellah Z."/>
            <person name="Arrosmith C."/>
            <person name="Atkin B."/>
            <person name="Chillingworth T."/>
            <person name="Hauser H."/>
            <person name="Jagels K."/>
            <person name="Moule S."/>
            <person name="Mungall K."/>
            <person name="Norbertczak H."/>
            <person name="Rabbinowitsch E."/>
            <person name="Walker D."/>
            <person name="Whithead S."/>
            <person name="Thomson N.R."/>
            <person name="Rather P.N."/>
            <person name="Parkhill J."/>
            <person name="Mobley H.L.T."/>
        </authorList>
    </citation>
    <scope>NUCLEOTIDE SEQUENCE [LARGE SCALE GENOMIC DNA]</scope>
    <source>
        <strain>HI4320</strain>
    </source>
</reference>
<organism>
    <name type="scientific">Proteus mirabilis (strain HI4320)</name>
    <dbReference type="NCBI Taxonomy" id="529507"/>
    <lineage>
        <taxon>Bacteria</taxon>
        <taxon>Pseudomonadati</taxon>
        <taxon>Pseudomonadota</taxon>
        <taxon>Gammaproteobacteria</taxon>
        <taxon>Enterobacterales</taxon>
        <taxon>Morganellaceae</taxon>
        <taxon>Proteus</taxon>
    </lineage>
</organism>
<gene>
    <name evidence="1" type="primary">ispH</name>
    <name type="ordered locus">PMI0018</name>
</gene>
<protein>
    <recommendedName>
        <fullName evidence="1">4-hydroxy-3-methylbut-2-enyl diphosphate reductase</fullName>
        <shortName evidence="1">HMBPP reductase</shortName>
        <ecNumber evidence="1">1.17.7.4</ecNumber>
    </recommendedName>
</protein>
<proteinExistence type="inferred from homology"/>
<dbReference type="EC" id="1.17.7.4" evidence="1"/>
<dbReference type="EMBL" id="AM942759">
    <property type="protein sequence ID" value="CAR40258.1"/>
    <property type="molecule type" value="Genomic_DNA"/>
</dbReference>
<dbReference type="RefSeq" id="WP_012367440.1">
    <property type="nucleotide sequence ID" value="NC_010554.1"/>
</dbReference>
<dbReference type="SMR" id="B4F2T8"/>
<dbReference type="EnsemblBacteria" id="CAR40258">
    <property type="protein sequence ID" value="CAR40258"/>
    <property type="gene ID" value="PMI0018"/>
</dbReference>
<dbReference type="GeneID" id="6802267"/>
<dbReference type="KEGG" id="pmr:PMI0018"/>
<dbReference type="PATRIC" id="fig|529507.6.peg.18"/>
<dbReference type="eggNOG" id="COG0761">
    <property type="taxonomic scope" value="Bacteria"/>
</dbReference>
<dbReference type="HOGENOM" id="CLU_027486_1_0_6"/>
<dbReference type="UniPathway" id="UPA00056">
    <property type="reaction ID" value="UER00097"/>
</dbReference>
<dbReference type="UniPathway" id="UPA00059">
    <property type="reaction ID" value="UER00105"/>
</dbReference>
<dbReference type="Proteomes" id="UP000008319">
    <property type="component" value="Chromosome"/>
</dbReference>
<dbReference type="GO" id="GO:0051539">
    <property type="term" value="F:4 iron, 4 sulfur cluster binding"/>
    <property type="evidence" value="ECO:0007669"/>
    <property type="project" value="UniProtKB-UniRule"/>
</dbReference>
<dbReference type="GO" id="GO:0051745">
    <property type="term" value="F:4-hydroxy-3-methylbut-2-enyl diphosphate reductase activity"/>
    <property type="evidence" value="ECO:0007669"/>
    <property type="project" value="UniProtKB-UniRule"/>
</dbReference>
<dbReference type="GO" id="GO:0046872">
    <property type="term" value="F:metal ion binding"/>
    <property type="evidence" value="ECO:0007669"/>
    <property type="project" value="UniProtKB-KW"/>
</dbReference>
<dbReference type="GO" id="GO:0050992">
    <property type="term" value="P:dimethylallyl diphosphate biosynthetic process"/>
    <property type="evidence" value="ECO:0007669"/>
    <property type="project" value="UniProtKB-UniRule"/>
</dbReference>
<dbReference type="GO" id="GO:0019288">
    <property type="term" value="P:isopentenyl diphosphate biosynthetic process, methylerythritol 4-phosphate pathway"/>
    <property type="evidence" value="ECO:0007669"/>
    <property type="project" value="UniProtKB-UniRule"/>
</dbReference>
<dbReference type="GO" id="GO:0016114">
    <property type="term" value="P:terpenoid biosynthetic process"/>
    <property type="evidence" value="ECO:0007669"/>
    <property type="project" value="UniProtKB-UniRule"/>
</dbReference>
<dbReference type="CDD" id="cd13944">
    <property type="entry name" value="lytB_ispH"/>
    <property type="match status" value="1"/>
</dbReference>
<dbReference type="FunFam" id="3.40.50.11270:FF:000001">
    <property type="entry name" value="4-hydroxy-3-methylbut-2-enyl diphosphate reductase"/>
    <property type="match status" value="1"/>
</dbReference>
<dbReference type="Gene3D" id="3.40.50.11270">
    <property type="match status" value="1"/>
</dbReference>
<dbReference type="Gene3D" id="3.40.1010.20">
    <property type="entry name" value="4-hydroxy-3-methylbut-2-enyl diphosphate reductase, catalytic domain"/>
    <property type="match status" value="2"/>
</dbReference>
<dbReference type="HAMAP" id="MF_00191">
    <property type="entry name" value="IspH"/>
    <property type="match status" value="1"/>
</dbReference>
<dbReference type="InterPro" id="IPR003451">
    <property type="entry name" value="LytB/IspH"/>
</dbReference>
<dbReference type="NCBIfam" id="TIGR00216">
    <property type="entry name" value="ispH_lytB"/>
    <property type="match status" value="1"/>
</dbReference>
<dbReference type="NCBIfam" id="NF002188">
    <property type="entry name" value="PRK01045.1-2"/>
    <property type="match status" value="1"/>
</dbReference>
<dbReference type="NCBIfam" id="NF002190">
    <property type="entry name" value="PRK01045.1-4"/>
    <property type="match status" value="1"/>
</dbReference>
<dbReference type="PANTHER" id="PTHR30426">
    <property type="entry name" value="4-HYDROXY-3-METHYLBUT-2-ENYL DIPHOSPHATE REDUCTASE"/>
    <property type="match status" value="1"/>
</dbReference>
<dbReference type="PANTHER" id="PTHR30426:SF0">
    <property type="entry name" value="4-HYDROXY-3-METHYLBUT-2-ENYL DIPHOSPHATE REDUCTASE"/>
    <property type="match status" value="1"/>
</dbReference>
<dbReference type="Pfam" id="PF02401">
    <property type="entry name" value="LYTB"/>
    <property type="match status" value="1"/>
</dbReference>
<comment type="function">
    <text evidence="1">Catalyzes the conversion of 1-hydroxy-2-methyl-2-(E)-butenyl 4-diphosphate (HMBPP) into a mixture of isopentenyl diphosphate (IPP) and dimethylallyl diphosphate (DMAPP). Acts in the terminal step of the DOXP/MEP pathway for isoprenoid precursor biosynthesis.</text>
</comment>
<comment type="catalytic activity">
    <reaction evidence="1">
        <text>isopentenyl diphosphate + 2 oxidized [2Fe-2S]-[ferredoxin] + H2O = (2E)-4-hydroxy-3-methylbut-2-enyl diphosphate + 2 reduced [2Fe-2S]-[ferredoxin] + 2 H(+)</text>
        <dbReference type="Rhea" id="RHEA:24488"/>
        <dbReference type="Rhea" id="RHEA-COMP:10000"/>
        <dbReference type="Rhea" id="RHEA-COMP:10001"/>
        <dbReference type="ChEBI" id="CHEBI:15377"/>
        <dbReference type="ChEBI" id="CHEBI:15378"/>
        <dbReference type="ChEBI" id="CHEBI:33737"/>
        <dbReference type="ChEBI" id="CHEBI:33738"/>
        <dbReference type="ChEBI" id="CHEBI:128753"/>
        <dbReference type="ChEBI" id="CHEBI:128769"/>
        <dbReference type="EC" id="1.17.7.4"/>
    </reaction>
</comment>
<comment type="catalytic activity">
    <reaction evidence="1">
        <text>dimethylallyl diphosphate + 2 oxidized [2Fe-2S]-[ferredoxin] + H2O = (2E)-4-hydroxy-3-methylbut-2-enyl diphosphate + 2 reduced [2Fe-2S]-[ferredoxin] + 2 H(+)</text>
        <dbReference type="Rhea" id="RHEA:24825"/>
        <dbReference type="Rhea" id="RHEA-COMP:10000"/>
        <dbReference type="Rhea" id="RHEA-COMP:10001"/>
        <dbReference type="ChEBI" id="CHEBI:15377"/>
        <dbReference type="ChEBI" id="CHEBI:15378"/>
        <dbReference type="ChEBI" id="CHEBI:33737"/>
        <dbReference type="ChEBI" id="CHEBI:33738"/>
        <dbReference type="ChEBI" id="CHEBI:57623"/>
        <dbReference type="ChEBI" id="CHEBI:128753"/>
        <dbReference type="EC" id="1.17.7.4"/>
    </reaction>
</comment>
<comment type="cofactor">
    <cofactor evidence="1">
        <name>[4Fe-4S] cluster</name>
        <dbReference type="ChEBI" id="CHEBI:49883"/>
    </cofactor>
    <text evidence="1">Binds 1 [4Fe-4S] cluster per subunit.</text>
</comment>
<comment type="pathway">
    <text evidence="1">Isoprenoid biosynthesis; dimethylallyl diphosphate biosynthesis; dimethylallyl diphosphate from (2E)-4-hydroxy-3-methylbutenyl diphosphate: step 1/1.</text>
</comment>
<comment type="pathway">
    <text evidence="1">Isoprenoid biosynthesis; isopentenyl diphosphate biosynthesis via DXP pathway; isopentenyl diphosphate from 1-deoxy-D-xylulose 5-phosphate: step 6/6.</text>
</comment>
<comment type="subunit">
    <text evidence="1">Homodimer.</text>
</comment>
<comment type="similarity">
    <text evidence="1">Belongs to the IspH family.</text>
</comment>
<sequence length="317" mass="35143">MQILLANPRGFCAGVDRAISIVERALEIYGAPIYVRHEVVHNRYVVNDLRERGAIFIEEISEVPDNAILIFSAHGVSQAIRQEARSRNLTMLFDATCPLVTKVHMEVARASRKGKEAILIGHAGHPEVEGTMGQYNNPEGGMYLVESPDDVWKLKVKDEDNLCFMTQTTLSVDDTSEVIDALNKRFPKIIGPRKDDICYATTNRQEAARELAERADVVFVVGSKNSSNSNRLAELAQRAGKPSYLIDSAEDIDEIWVSHANIVGVTAGASAPDILVQQVLARLKAFGAEEVIELSGREENIVFEVPKELRLDYKVVE</sequence>